<organism>
    <name type="scientific">Mycolicibacterium smegmatis (strain ATCC 700084 / mc(2)155)</name>
    <name type="common">Mycobacterium smegmatis</name>
    <dbReference type="NCBI Taxonomy" id="246196"/>
    <lineage>
        <taxon>Bacteria</taxon>
        <taxon>Bacillati</taxon>
        <taxon>Actinomycetota</taxon>
        <taxon>Actinomycetes</taxon>
        <taxon>Mycobacteriales</taxon>
        <taxon>Mycobacteriaceae</taxon>
        <taxon>Mycolicibacterium</taxon>
    </lineage>
</organism>
<sequence>MRPDHRMGPPHDEEPHMPETIDAVPEIDDLRREIDELDATIIAAIQRRTEVSKTIGKARMASGGTRLVHSREMKVIERYIDALGPEGKDLAMLLLRLGRGRLGY</sequence>
<keyword id="KW-0028">Amino-acid biosynthesis</keyword>
<keyword id="KW-0057">Aromatic amino acid biosynthesis</keyword>
<keyword id="KW-0963">Cytoplasm</keyword>
<keyword id="KW-0413">Isomerase</keyword>
<keyword id="KW-1185">Reference proteome</keyword>
<reference key="1">
    <citation type="submission" date="2006-10" db="EMBL/GenBank/DDBJ databases">
        <authorList>
            <person name="Fleischmann R.D."/>
            <person name="Dodson R.J."/>
            <person name="Haft D.H."/>
            <person name="Merkel J.S."/>
            <person name="Nelson W.C."/>
            <person name="Fraser C.M."/>
        </authorList>
    </citation>
    <scope>NUCLEOTIDE SEQUENCE [LARGE SCALE GENOMIC DNA]</scope>
    <source>
        <strain>ATCC 700084 / mc(2)155</strain>
    </source>
</reference>
<reference key="2">
    <citation type="journal article" date="2007" name="Genome Biol.">
        <title>Interrupted coding sequences in Mycobacterium smegmatis: authentic mutations or sequencing errors?</title>
        <authorList>
            <person name="Deshayes C."/>
            <person name="Perrodou E."/>
            <person name="Gallien S."/>
            <person name="Euphrasie D."/>
            <person name="Schaeffer C."/>
            <person name="Van-Dorsselaer A."/>
            <person name="Poch O."/>
            <person name="Lecompte O."/>
            <person name="Reyrat J.-M."/>
        </authorList>
    </citation>
    <scope>NUCLEOTIDE SEQUENCE [LARGE SCALE GENOMIC DNA]</scope>
    <source>
        <strain>ATCC 700084 / mc(2)155</strain>
    </source>
</reference>
<reference key="3">
    <citation type="journal article" date="2009" name="Genome Res.">
        <title>Ortho-proteogenomics: multiple proteomes investigation through orthology and a new MS-based protocol.</title>
        <authorList>
            <person name="Gallien S."/>
            <person name="Perrodou E."/>
            <person name="Carapito C."/>
            <person name="Deshayes C."/>
            <person name="Reyrat J.-M."/>
            <person name="Van Dorsselaer A."/>
            <person name="Poch O."/>
            <person name="Schaeffer C."/>
            <person name="Lecompte O."/>
        </authorList>
    </citation>
    <scope>NUCLEOTIDE SEQUENCE [LARGE SCALE GENOMIC DNA]</scope>
    <source>
        <strain>ATCC 700084 / mc(2)155</strain>
    </source>
</reference>
<reference key="4">
    <citation type="journal article" date="2008" name="J. Bacteriol.">
        <title>The two chorismate mutases from both Mycobacterium tuberculosis and Mycobacterium smegmatis: biochemical analysis and limited regulation of promoter activity by aromatic amino acids.</title>
        <authorList>
            <person name="Schneider C.Z."/>
            <person name="Parish T."/>
            <person name="Basso L.A."/>
            <person name="Santos D.S."/>
        </authorList>
    </citation>
    <scope>FUNCTION</scope>
    <scope>CATALYTIC ACTIVITY</scope>
    <scope>INTERACTION WITH MSMEG_4244</scope>
</reference>
<protein>
    <recommendedName>
        <fullName evidence="1">Intracellular chorismate mutase</fullName>
        <shortName evidence="1">CM</shortName>
        <ecNumber evidence="3">5.4.99.5</ecNumber>
    </recommendedName>
</protein>
<evidence type="ECO:0000250" key="1">
    <source>
        <dbReference type="UniProtKB" id="P9WIC1"/>
    </source>
</evidence>
<evidence type="ECO:0000255" key="2">
    <source>
        <dbReference type="PROSITE-ProRule" id="PRU00515"/>
    </source>
</evidence>
<evidence type="ECO:0000269" key="3">
    <source>
    </source>
</evidence>
<evidence type="ECO:0000305" key="4"/>
<name>CHMU_MYCS2</name>
<comment type="function">
    <text evidence="3">Catalyzes the Claisen rearrangement of chorismate to prephenate. Probably involved in the aromatic amino acid biosynthesis.</text>
</comment>
<comment type="catalytic activity">
    <reaction evidence="3">
        <text>chorismate = prephenate</text>
        <dbReference type="Rhea" id="RHEA:13897"/>
        <dbReference type="ChEBI" id="CHEBI:29748"/>
        <dbReference type="ChEBI" id="CHEBI:29934"/>
        <dbReference type="EC" id="5.4.99.5"/>
    </reaction>
</comment>
<comment type="activity regulation">
    <text evidence="1">The formation of the complex with AroG activates the chorismate mutase activity.</text>
</comment>
<comment type="pathway">
    <text evidence="1">Metabolic intermediate biosynthesis; prephenate biosynthesis; prephenate from chorismate: step 1/1.</text>
</comment>
<comment type="subunit">
    <text evidence="1 3">Homodimer (By similarity). Probably interacts with AroG (MSMEG_4244) (PubMed:17965159).</text>
</comment>
<comment type="subcellular location">
    <subcellularLocation>
        <location evidence="4">Cytoplasm</location>
    </subcellularLocation>
</comment>
<comment type="sequence caution" evidence="4">
    <conflict type="erroneous initiation">
        <sequence resource="EMBL-CDS" id="ABK71866"/>
    </conflict>
    <text>Truncated N-terminus.</text>
</comment>
<comment type="sequence caution" evidence="4">
    <conflict type="erroneous initiation">
        <sequence resource="EMBL-CDS" id="AFP41824"/>
    </conflict>
    <text>Truncated N-terminus.</text>
</comment>
<dbReference type="EC" id="5.4.99.5" evidence="3"/>
<dbReference type="EMBL" id="CP000480">
    <property type="protein sequence ID" value="ABK71866.1"/>
    <property type="status" value="ALT_INIT"/>
    <property type="molecule type" value="Genomic_DNA"/>
</dbReference>
<dbReference type="EMBL" id="CP001663">
    <property type="protein sequence ID" value="AFP41824.1"/>
    <property type="status" value="ALT_INIT"/>
    <property type="molecule type" value="Genomic_DNA"/>
</dbReference>
<dbReference type="RefSeq" id="YP_889773.1">
    <property type="nucleotide sequence ID" value="NC_008596.1"/>
</dbReference>
<dbReference type="SMR" id="A0R3N5"/>
<dbReference type="STRING" id="246196.MSMEG_5536"/>
<dbReference type="PaxDb" id="246196-MSMEI_5383"/>
<dbReference type="KEGG" id="msg:MSMEI_5383"/>
<dbReference type="KEGG" id="msm:MSMEG_5536"/>
<dbReference type="PATRIC" id="fig|246196.19.peg.5395"/>
<dbReference type="eggNOG" id="COG1605">
    <property type="taxonomic scope" value="Bacteria"/>
</dbReference>
<dbReference type="OrthoDB" id="4424544at2"/>
<dbReference type="UniPathway" id="UPA00120">
    <property type="reaction ID" value="UER00203"/>
</dbReference>
<dbReference type="Proteomes" id="UP000000757">
    <property type="component" value="Chromosome"/>
</dbReference>
<dbReference type="Proteomes" id="UP000006158">
    <property type="component" value="Chromosome"/>
</dbReference>
<dbReference type="GO" id="GO:0005737">
    <property type="term" value="C:cytoplasm"/>
    <property type="evidence" value="ECO:0007669"/>
    <property type="project" value="UniProtKB-SubCell"/>
</dbReference>
<dbReference type="GO" id="GO:0005886">
    <property type="term" value="C:plasma membrane"/>
    <property type="evidence" value="ECO:0000250"/>
    <property type="project" value="UniProtKB"/>
</dbReference>
<dbReference type="GO" id="GO:0004106">
    <property type="term" value="F:chorismate mutase activity"/>
    <property type="evidence" value="ECO:0000314"/>
    <property type="project" value="UniProtKB"/>
</dbReference>
<dbReference type="GO" id="GO:0008652">
    <property type="term" value="P:amino acid biosynthetic process"/>
    <property type="evidence" value="ECO:0007669"/>
    <property type="project" value="UniProtKB-KW"/>
</dbReference>
<dbReference type="GO" id="GO:0009095">
    <property type="term" value="P:aromatic amino acid family biosynthetic process, prephenate pathway"/>
    <property type="evidence" value="ECO:0000250"/>
    <property type="project" value="UniProtKB"/>
</dbReference>
<dbReference type="GO" id="GO:0046417">
    <property type="term" value="P:chorismate metabolic process"/>
    <property type="evidence" value="ECO:0000314"/>
    <property type="project" value="UniProtKB"/>
</dbReference>
<dbReference type="GO" id="GO:0009697">
    <property type="term" value="P:salicylic acid biosynthetic process"/>
    <property type="evidence" value="ECO:0007669"/>
    <property type="project" value="TreeGrafter"/>
</dbReference>
<dbReference type="Gene3D" id="1.20.59.10">
    <property type="entry name" value="Chorismate mutase"/>
    <property type="match status" value="1"/>
</dbReference>
<dbReference type="InterPro" id="IPR036263">
    <property type="entry name" value="Chorismate_II_sf"/>
</dbReference>
<dbReference type="InterPro" id="IPR051331">
    <property type="entry name" value="Chorismate_mutase-related"/>
</dbReference>
<dbReference type="InterPro" id="IPR010958">
    <property type="entry name" value="Chorismate_mutase_highGC-bac"/>
</dbReference>
<dbReference type="InterPro" id="IPR036979">
    <property type="entry name" value="CM_dom_sf"/>
</dbReference>
<dbReference type="InterPro" id="IPR002701">
    <property type="entry name" value="CM_II_prokaryot"/>
</dbReference>
<dbReference type="NCBIfam" id="TIGR01808">
    <property type="entry name" value="CM_M_hiGC-arch"/>
    <property type="match status" value="1"/>
</dbReference>
<dbReference type="NCBIfam" id="NF005894">
    <property type="entry name" value="PRK07857.1"/>
    <property type="match status" value="1"/>
</dbReference>
<dbReference type="PANTHER" id="PTHR38041">
    <property type="entry name" value="CHORISMATE MUTASE"/>
    <property type="match status" value="1"/>
</dbReference>
<dbReference type="PANTHER" id="PTHR38041:SF1">
    <property type="entry name" value="CHORISMATE MUTASE"/>
    <property type="match status" value="1"/>
</dbReference>
<dbReference type="Pfam" id="PF01817">
    <property type="entry name" value="CM_2"/>
    <property type="match status" value="1"/>
</dbReference>
<dbReference type="SMART" id="SM00830">
    <property type="entry name" value="CM_2"/>
    <property type="match status" value="1"/>
</dbReference>
<dbReference type="SUPFAM" id="SSF48600">
    <property type="entry name" value="Chorismate mutase II"/>
    <property type="match status" value="1"/>
</dbReference>
<dbReference type="PROSITE" id="PS51168">
    <property type="entry name" value="CHORISMATE_MUT_2"/>
    <property type="match status" value="1"/>
</dbReference>
<accession>A0R3N5</accession>
<accession>I7GFF2</accession>
<feature type="chain" id="PRO_0000414904" description="Intracellular chorismate mutase">
    <location>
        <begin position="1"/>
        <end position="104"/>
    </location>
</feature>
<feature type="domain" description="Chorismate mutase" evidence="2">
    <location>
        <begin position="23"/>
        <end position="104"/>
    </location>
</feature>
<feature type="binding site" evidence="1">
    <location>
        <position position="59"/>
    </location>
    <ligand>
        <name>chorismate</name>
        <dbReference type="ChEBI" id="CHEBI:29748"/>
    </ligand>
</feature>
<feature type="binding site" evidence="1">
    <location>
        <position position="68"/>
    </location>
    <ligand>
        <name>chorismate</name>
        <dbReference type="ChEBI" id="CHEBI:29748"/>
    </ligand>
</feature>
<feature type="binding site" evidence="1">
    <location>
        <position position="72"/>
    </location>
    <ligand>
        <name>chorismate</name>
        <dbReference type="ChEBI" id="CHEBI:29748"/>
    </ligand>
</feature>
<feature type="site" description="Important for catalysis" evidence="1">
    <location>
        <position position="59"/>
    </location>
</feature>
<feature type="site" description="Important for activation via AroG" evidence="1">
    <location>
        <position position="100"/>
    </location>
</feature>
<feature type="site" description="Important for activation via AroG" evidence="1">
    <location>
        <position position="101"/>
    </location>
</feature>
<feature type="site" description="Important for activation via AroG" evidence="1">
    <location>
        <position position="102"/>
    </location>
</feature>
<proteinExistence type="evidence at protein level"/>
<gene>
    <name type="ordered locus">MSMEG_5536</name>
    <name type="ordered locus">MSMEI_5383</name>
</gene>